<reference key="1">
    <citation type="submission" date="2009-01" db="EMBL/GenBank/DDBJ databases">
        <title>Complete sequence of Clostridium cellulolyticum H10.</title>
        <authorList>
            <consortium name="US DOE Joint Genome Institute"/>
            <person name="Lucas S."/>
            <person name="Copeland A."/>
            <person name="Lapidus A."/>
            <person name="Glavina del Rio T."/>
            <person name="Dalin E."/>
            <person name="Tice H."/>
            <person name="Bruce D."/>
            <person name="Goodwin L."/>
            <person name="Pitluck S."/>
            <person name="Chertkov O."/>
            <person name="Saunders E."/>
            <person name="Brettin T."/>
            <person name="Detter J.C."/>
            <person name="Han C."/>
            <person name="Larimer F."/>
            <person name="Land M."/>
            <person name="Hauser L."/>
            <person name="Kyrpides N."/>
            <person name="Ivanova N."/>
            <person name="Zhou J."/>
            <person name="Richardson P."/>
        </authorList>
    </citation>
    <scope>NUCLEOTIDE SEQUENCE [LARGE SCALE GENOMIC DNA]</scope>
    <source>
        <strain>ATCC 35319 / DSM 5812 / JCM 6584 / H10</strain>
    </source>
</reference>
<proteinExistence type="inferred from homology"/>
<name>YQGF_RUMCH</name>
<protein>
    <recommendedName>
        <fullName evidence="1">Putative pre-16S rRNA nuclease</fullName>
        <ecNumber evidence="1">3.1.-.-</ecNumber>
    </recommendedName>
</protein>
<sequence>MRILGIDYGDSRIGVAISDPMGWTAQGLEMIKSKDSLKKAVLRLSEIINEYSVTDIVIGYPINMNGTKGPRTERTEEFIKKISDLGQFNIIKWDERLTTVSAHRTMNELGIKASKKKGIVDTMSAVLILQGYLDRIAGNKKS</sequence>
<dbReference type="EC" id="3.1.-.-" evidence="1"/>
<dbReference type="EMBL" id="CP001348">
    <property type="protein sequence ID" value="ACL76581.1"/>
    <property type="molecule type" value="Genomic_DNA"/>
</dbReference>
<dbReference type="RefSeq" id="WP_015925673.1">
    <property type="nucleotide sequence ID" value="NC_011898.1"/>
</dbReference>
<dbReference type="SMR" id="B8I4S7"/>
<dbReference type="STRING" id="394503.Ccel_2239"/>
<dbReference type="KEGG" id="cce:Ccel_2239"/>
<dbReference type="eggNOG" id="COG0816">
    <property type="taxonomic scope" value="Bacteria"/>
</dbReference>
<dbReference type="HOGENOM" id="CLU_098240_2_0_9"/>
<dbReference type="OrthoDB" id="9796140at2"/>
<dbReference type="Proteomes" id="UP000001349">
    <property type="component" value="Chromosome"/>
</dbReference>
<dbReference type="GO" id="GO:0005829">
    <property type="term" value="C:cytosol"/>
    <property type="evidence" value="ECO:0007669"/>
    <property type="project" value="TreeGrafter"/>
</dbReference>
<dbReference type="GO" id="GO:0004518">
    <property type="term" value="F:nuclease activity"/>
    <property type="evidence" value="ECO:0007669"/>
    <property type="project" value="UniProtKB-KW"/>
</dbReference>
<dbReference type="GO" id="GO:0000967">
    <property type="term" value="P:rRNA 5'-end processing"/>
    <property type="evidence" value="ECO:0007669"/>
    <property type="project" value="UniProtKB-UniRule"/>
</dbReference>
<dbReference type="CDD" id="cd16964">
    <property type="entry name" value="YqgF"/>
    <property type="match status" value="1"/>
</dbReference>
<dbReference type="Gene3D" id="3.30.420.140">
    <property type="entry name" value="YqgF/RNase H-like domain"/>
    <property type="match status" value="1"/>
</dbReference>
<dbReference type="HAMAP" id="MF_00651">
    <property type="entry name" value="Nuclease_YqgF"/>
    <property type="match status" value="1"/>
</dbReference>
<dbReference type="InterPro" id="IPR012337">
    <property type="entry name" value="RNaseH-like_sf"/>
</dbReference>
<dbReference type="InterPro" id="IPR005227">
    <property type="entry name" value="YqgF"/>
</dbReference>
<dbReference type="InterPro" id="IPR006641">
    <property type="entry name" value="YqgF/RNaseH-like_dom"/>
</dbReference>
<dbReference type="InterPro" id="IPR037027">
    <property type="entry name" value="YqgF/RNaseH-like_dom_sf"/>
</dbReference>
<dbReference type="NCBIfam" id="TIGR00250">
    <property type="entry name" value="RNAse_H_YqgF"/>
    <property type="match status" value="1"/>
</dbReference>
<dbReference type="PANTHER" id="PTHR33317">
    <property type="entry name" value="POLYNUCLEOTIDYL TRANSFERASE, RIBONUCLEASE H-LIKE SUPERFAMILY PROTEIN"/>
    <property type="match status" value="1"/>
</dbReference>
<dbReference type="PANTHER" id="PTHR33317:SF4">
    <property type="entry name" value="POLYNUCLEOTIDYL TRANSFERASE, RIBONUCLEASE H-LIKE SUPERFAMILY PROTEIN"/>
    <property type="match status" value="1"/>
</dbReference>
<dbReference type="Pfam" id="PF03652">
    <property type="entry name" value="RuvX"/>
    <property type="match status" value="1"/>
</dbReference>
<dbReference type="SMART" id="SM00732">
    <property type="entry name" value="YqgFc"/>
    <property type="match status" value="1"/>
</dbReference>
<dbReference type="SUPFAM" id="SSF53098">
    <property type="entry name" value="Ribonuclease H-like"/>
    <property type="match status" value="1"/>
</dbReference>
<evidence type="ECO:0000255" key="1">
    <source>
        <dbReference type="HAMAP-Rule" id="MF_00651"/>
    </source>
</evidence>
<keyword id="KW-0963">Cytoplasm</keyword>
<keyword id="KW-0378">Hydrolase</keyword>
<keyword id="KW-0540">Nuclease</keyword>
<keyword id="KW-1185">Reference proteome</keyword>
<keyword id="KW-0690">Ribosome biogenesis</keyword>
<organism>
    <name type="scientific">Ruminiclostridium cellulolyticum (strain ATCC 35319 / DSM 5812 / JCM 6584 / H10)</name>
    <name type="common">Clostridium cellulolyticum</name>
    <dbReference type="NCBI Taxonomy" id="394503"/>
    <lineage>
        <taxon>Bacteria</taxon>
        <taxon>Bacillati</taxon>
        <taxon>Bacillota</taxon>
        <taxon>Clostridia</taxon>
        <taxon>Eubacteriales</taxon>
        <taxon>Oscillospiraceae</taxon>
        <taxon>Ruminiclostridium</taxon>
    </lineage>
</organism>
<gene>
    <name type="ordered locus">Ccel_2239</name>
</gene>
<feature type="chain" id="PRO_1000147473" description="Putative pre-16S rRNA nuclease">
    <location>
        <begin position="1"/>
        <end position="142"/>
    </location>
</feature>
<accession>B8I4S7</accession>
<comment type="function">
    <text evidence="1">Could be a nuclease involved in processing of the 5'-end of pre-16S rRNA.</text>
</comment>
<comment type="subcellular location">
    <subcellularLocation>
        <location evidence="1">Cytoplasm</location>
    </subcellularLocation>
</comment>
<comment type="similarity">
    <text evidence="1">Belongs to the YqgF nuclease family.</text>
</comment>